<name>RL24_STAA9</name>
<reference key="1">
    <citation type="submission" date="2007-05" db="EMBL/GenBank/DDBJ databases">
        <title>Complete sequence of chromosome of Staphylococcus aureus subsp. aureus JH9.</title>
        <authorList>
            <consortium name="US DOE Joint Genome Institute"/>
            <person name="Copeland A."/>
            <person name="Lucas S."/>
            <person name="Lapidus A."/>
            <person name="Barry K."/>
            <person name="Detter J.C."/>
            <person name="Glavina del Rio T."/>
            <person name="Hammon N."/>
            <person name="Israni S."/>
            <person name="Pitluck S."/>
            <person name="Chain P."/>
            <person name="Malfatti S."/>
            <person name="Shin M."/>
            <person name="Vergez L."/>
            <person name="Schmutz J."/>
            <person name="Larimer F."/>
            <person name="Land M."/>
            <person name="Hauser L."/>
            <person name="Kyrpides N."/>
            <person name="Kim E."/>
            <person name="Tomasz A."/>
            <person name="Richardson P."/>
        </authorList>
    </citation>
    <scope>NUCLEOTIDE SEQUENCE [LARGE SCALE GENOMIC DNA]</scope>
    <source>
        <strain>JH9</strain>
    </source>
</reference>
<gene>
    <name evidence="1" type="primary">rplX</name>
    <name type="ordered locus">SaurJH9_2266</name>
</gene>
<comment type="function">
    <text evidence="1">One of two assembly initiator proteins, it binds directly to the 5'-end of the 23S rRNA, where it nucleates assembly of the 50S subunit.</text>
</comment>
<comment type="function">
    <text evidence="1">One of the proteins that surrounds the polypeptide exit tunnel on the outside of the subunit.</text>
</comment>
<comment type="subunit">
    <text evidence="1">Part of the 50S ribosomal subunit.</text>
</comment>
<comment type="similarity">
    <text evidence="1">Belongs to the universal ribosomal protein uL24 family.</text>
</comment>
<protein>
    <recommendedName>
        <fullName evidence="1">Large ribosomal subunit protein uL24</fullName>
    </recommendedName>
    <alternativeName>
        <fullName evidence="2">50S ribosomal protein L24</fullName>
    </alternativeName>
</protein>
<organism>
    <name type="scientific">Staphylococcus aureus (strain JH9)</name>
    <dbReference type="NCBI Taxonomy" id="359786"/>
    <lineage>
        <taxon>Bacteria</taxon>
        <taxon>Bacillati</taxon>
        <taxon>Bacillota</taxon>
        <taxon>Bacilli</taxon>
        <taxon>Bacillales</taxon>
        <taxon>Staphylococcaceae</taxon>
        <taxon>Staphylococcus</taxon>
    </lineage>
</organism>
<feature type="chain" id="PRO_1000086500" description="Large ribosomal subunit protein uL24">
    <location>
        <begin position="1"/>
        <end position="105"/>
    </location>
</feature>
<evidence type="ECO:0000255" key="1">
    <source>
        <dbReference type="HAMAP-Rule" id="MF_01326"/>
    </source>
</evidence>
<evidence type="ECO:0000305" key="2"/>
<proteinExistence type="inferred from homology"/>
<dbReference type="EMBL" id="CP000703">
    <property type="protein sequence ID" value="ABQ50046.1"/>
    <property type="molecule type" value="Genomic_DNA"/>
</dbReference>
<dbReference type="RefSeq" id="WP_000547687.1">
    <property type="nucleotide sequence ID" value="NC_009487.1"/>
</dbReference>
<dbReference type="SMR" id="A5IV23"/>
<dbReference type="KEGG" id="saj:SaurJH9_2266"/>
<dbReference type="HOGENOM" id="CLU_093315_2_0_9"/>
<dbReference type="GO" id="GO:1990904">
    <property type="term" value="C:ribonucleoprotein complex"/>
    <property type="evidence" value="ECO:0007669"/>
    <property type="project" value="UniProtKB-KW"/>
</dbReference>
<dbReference type="GO" id="GO:0005840">
    <property type="term" value="C:ribosome"/>
    <property type="evidence" value="ECO:0007669"/>
    <property type="project" value="UniProtKB-KW"/>
</dbReference>
<dbReference type="GO" id="GO:0019843">
    <property type="term" value="F:rRNA binding"/>
    <property type="evidence" value="ECO:0007669"/>
    <property type="project" value="UniProtKB-UniRule"/>
</dbReference>
<dbReference type="GO" id="GO:0003735">
    <property type="term" value="F:structural constituent of ribosome"/>
    <property type="evidence" value="ECO:0007669"/>
    <property type="project" value="InterPro"/>
</dbReference>
<dbReference type="GO" id="GO:0006412">
    <property type="term" value="P:translation"/>
    <property type="evidence" value="ECO:0007669"/>
    <property type="project" value="UniProtKB-UniRule"/>
</dbReference>
<dbReference type="CDD" id="cd06089">
    <property type="entry name" value="KOW_RPL26"/>
    <property type="match status" value="1"/>
</dbReference>
<dbReference type="FunFam" id="2.30.30.30:FF:000004">
    <property type="entry name" value="50S ribosomal protein L24"/>
    <property type="match status" value="1"/>
</dbReference>
<dbReference type="Gene3D" id="2.30.30.30">
    <property type="match status" value="1"/>
</dbReference>
<dbReference type="HAMAP" id="MF_01326_B">
    <property type="entry name" value="Ribosomal_uL24_B"/>
    <property type="match status" value="1"/>
</dbReference>
<dbReference type="InterPro" id="IPR005824">
    <property type="entry name" value="KOW"/>
</dbReference>
<dbReference type="InterPro" id="IPR014722">
    <property type="entry name" value="Rib_uL2_dom2"/>
</dbReference>
<dbReference type="InterPro" id="IPR003256">
    <property type="entry name" value="Ribosomal_uL24"/>
</dbReference>
<dbReference type="InterPro" id="IPR005825">
    <property type="entry name" value="Ribosomal_uL24_CS"/>
</dbReference>
<dbReference type="InterPro" id="IPR041988">
    <property type="entry name" value="Ribosomal_uL24_KOW"/>
</dbReference>
<dbReference type="InterPro" id="IPR008991">
    <property type="entry name" value="Translation_prot_SH3-like_sf"/>
</dbReference>
<dbReference type="NCBIfam" id="TIGR01079">
    <property type="entry name" value="rplX_bact"/>
    <property type="match status" value="1"/>
</dbReference>
<dbReference type="PANTHER" id="PTHR12903">
    <property type="entry name" value="MITOCHONDRIAL RIBOSOMAL PROTEIN L24"/>
    <property type="match status" value="1"/>
</dbReference>
<dbReference type="Pfam" id="PF00467">
    <property type="entry name" value="KOW"/>
    <property type="match status" value="1"/>
</dbReference>
<dbReference type="Pfam" id="PF17136">
    <property type="entry name" value="ribosomal_L24"/>
    <property type="match status" value="1"/>
</dbReference>
<dbReference type="SMART" id="SM00739">
    <property type="entry name" value="KOW"/>
    <property type="match status" value="1"/>
</dbReference>
<dbReference type="SUPFAM" id="SSF50104">
    <property type="entry name" value="Translation proteins SH3-like domain"/>
    <property type="match status" value="1"/>
</dbReference>
<dbReference type="PROSITE" id="PS01108">
    <property type="entry name" value="RIBOSOMAL_L24"/>
    <property type="match status" value="1"/>
</dbReference>
<sequence length="105" mass="11536">MHIKKGDNVKVIAGKDKGKEGKVIATLPKKDRVVVEGVNIMKKHQKPTQLNPEGGILETEAAIHVSNVQLLDPKTNEPTRVGYKFVDGKKVRIAKKSGEEIKSNN</sequence>
<accession>A5IV23</accession>
<keyword id="KW-0687">Ribonucleoprotein</keyword>
<keyword id="KW-0689">Ribosomal protein</keyword>
<keyword id="KW-0694">RNA-binding</keyword>
<keyword id="KW-0699">rRNA-binding</keyword>